<evidence type="ECO:0000250" key="1"/>
<evidence type="ECO:0000255" key="2">
    <source>
        <dbReference type="PROSITE-ProRule" id="PRU01019"/>
    </source>
</evidence>
<evidence type="ECO:0000256" key="3">
    <source>
        <dbReference type="SAM" id="MobiDB-lite"/>
    </source>
</evidence>
<evidence type="ECO:0000305" key="4"/>
<reference key="1">
    <citation type="journal article" date="2003" name="Proc. Natl. Acad. Sci. U.S.A.">
        <title>The complete genome sequence of Mycobacterium bovis.</title>
        <authorList>
            <person name="Garnier T."/>
            <person name="Eiglmeier K."/>
            <person name="Camus J.-C."/>
            <person name="Medina N."/>
            <person name="Mansoor H."/>
            <person name="Pryor M."/>
            <person name="Duthoy S."/>
            <person name="Grondin S."/>
            <person name="Lacroix C."/>
            <person name="Monsempe C."/>
            <person name="Simon S."/>
            <person name="Harris B."/>
            <person name="Atkin R."/>
            <person name="Doggett J."/>
            <person name="Mayes R."/>
            <person name="Keating L."/>
            <person name="Wheeler P.R."/>
            <person name="Parkhill J."/>
            <person name="Barrell B.G."/>
            <person name="Cole S.T."/>
            <person name="Gordon S.V."/>
            <person name="Hewinson R.G."/>
        </authorList>
    </citation>
    <scope>NUCLEOTIDE SEQUENCE [LARGE SCALE GENOMIC DNA]</scope>
    <source>
        <strain>ATCC BAA-935 / AF2122/97</strain>
    </source>
</reference>
<reference key="2">
    <citation type="journal article" date="2017" name="Genome Announc.">
        <title>Updated reference genome sequence and annotation of Mycobacterium bovis AF2122/97.</title>
        <authorList>
            <person name="Malone K.M."/>
            <person name="Farrell D."/>
            <person name="Stuber T.P."/>
            <person name="Schubert O.T."/>
            <person name="Aebersold R."/>
            <person name="Robbe-Austerman S."/>
            <person name="Gordon S.V."/>
        </authorList>
    </citation>
    <scope>NUCLEOTIDE SEQUENCE [LARGE SCALE GENOMIC DNA]</scope>
    <scope>GENOME REANNOTATION</scope>
    <source>
        <strain>ATCC BAA-935 / AF2122/97</strain>
    </source>
</reference>
<gene>
    <name type="ordered locus">BQ2027_MB1252C</name>
</gene>
<organism>
    <name type="scientific">Mycobacterium bovis (strain ATCC BAA-935 / AF2122/97)</name>
    <dbReference type="NCBI Taxonomy" id="233413"/>
    <lineage>
        <taxon>Bacteria</taxon>
        <taxon>Bacillati</taxon>
        <taxon>Actinomycetota</taxon>
        <taxon>Actinomycetes</taxon>
        <taxon>Mycobacteriales</taxon>
        <taxon>Mycobacteriaceae</taxon>
        <taxon>Mycobacterium</taxon>
        <taxon>Mycobacterium tuberculosis complex</taxon>
    </lineage>
</organism>
<dbReference type="EC" id="2.1.1.-"/>
<dbReference type="EMBL" id="LT708304">
    <property type="protein sequence ID" value="SIT99853.1"/>
    <property type="status" value="ALT_INIT"/>
    <property type="molecule type" value="Genomic_DNA"/>
</dbReference>
<dbReference type="RefSeq" id="NP_854906.1">
    <property type="nucleotide sequence ID" value="NC_002945.3"/>
</dbReference>
<dbReference type="RefSeq" id="WP_003911448.1">
    <property type="nucleotide sequence ID" value="NC_002945.4"/>
</dbReference>
<dbReference type="SMR" id="Q7U0D0"/>
<dbReference type="KEGG" id="mbo:BQ2027_MB1252C"/>
<dbReference type="PATRIC" id="fig|233413.5.peg.1373"/>
<dbReference type="Proteomes" id="UP000001419">
    <property type="component" value="Chromosome"/>
</dbReference>
<dbReference type="GO" id="GO:0008171">
    <property type="term" value="F:O-methyltransferase activity"/>
    <property type="evidence" value="ECO:0007669"/>
    <property type="project" value="InterPro"/>
</dbReference>
<dbReference type="GO" id="GO:0008757">
    <property type="term" value="F:S-adenosylmethionine-dependent methyltransferase activity"/>
    <property type="evidence" value="ECO:0007669"/>
    <property type="project" value="TreeGrafter"/>
</dbReference>
<dbReference type="GO" id="GO:0032259">
    <property type="term" value="P:methylation"/>
    <property type="evidence" value="ECO:0007669"/>
    <property type="project" value="UniProtKB-KW"/>
</dbReference>
<dbReference type="CDD" id="cd02440">
    <property type="entry name" value="AdoMet_MTases"/>
    <property type="match status" value="1"/>
</dbReference>
<dbReference type="FunFam" id="3.40.50.150:FF:000374">
    <property type="entry name" value="Putative methyltransferase"/>
    <property type="match status" value="1"/>
</dbReference>
<dbReference type="Gene3D" id="3.40.50.150">
    <property type="entry name" value="Vaccinia Virus protein VP39"/>
    <property type="match status" value="1"/>
</dbReference>
<dbReference type="InterPro" id="IPR050362">
    <property type="entry name" value="Cation-dep_OMT"/>
</dbReference>
<dbReference type="InterPro" id="IPR029063">
    <property type="entry name" value="SAM-dependent_MTases_sf"/>
</dbReference>
<dbReference type="InterPro" id="IPR002935">
    <property type="entry name" value="SAM_O-MeTrfase"/>
</dbReference>
<dbReference type="PANTHER" id="PTHR10509:SF85">
    <property type="entry name" value="O-METHYLTRANSFERASE RV1220C-RELATED"/>
    <property type="match status" value="1"/>
</dbReference>
<dbReference type="PANTHER" id="PTHR10509">
    <property type="entry name" value="O-METHYLTRANSFERASE-RELATED"/>
    <property type="match status" value="1"/>
</dbReference>
<dbReference type="Pfam" id="PF01596">
    <property type="entry name" value="Methyltransf_3"/>
    <property type="match status" value="1"/>
</dbReference>
<dbReference type="SUPFAM" id="SSF53335">
    <property type="entry name" value="S-adenosyl-L-methionine-dependent methyltransferases"/>
    <property type="match status" value="1"/>
</dbReference>
<dbReference type="PROSITE" id="PS51682">
    <property type="entry name" value="SAM_OMT_I"/>
    <property type="match status" value="1"/>
</dbReference>
<comment type="similarity">
    <text evidence="2">Belongs to the class I-like SAM-binding methyltransferase superfamily. Cation-dependent O-methyltransferase family.</text>
</comment>
<comment type="sequence caution" evidence="4">
    <conflict type="erroneous initiation">
        <sequence resource="EMBL-CDS" id="SIT99853"/>
    </conflict>
    <text>Truncated N-terminus.</text>
</comment>
<accession>Q7U0D0</accession>
<accession>A0A1R3XYN5</accession>
<accession>X2BH72</accession>
<keyword id="KW-0489">Methyltransferase</keyword>
<keyword id="KW-1185">Reference proteome</keyword>
<keyword id="KW-0949">S-adenosyl-L-methionine</keyword>
<keyword id="KW-0808">Transferase</keyword>
<name>Y1252_MYCBO</name>
<feature type="chain" id="PRO_0000380093" description="Putative O-methyltransferase Mb1252c">
    <location>
        <begin position="1"/>
        <end position="224"/>
    </location>
</feature>
<feature type="region of interest" description="Disordered" evidence="3">
    <location>
        <begin position="1"/>
        <end position="21"/>
    </location>
</feature>
<feature type="compositionally biased region" description="Basic and acidic residues" evidence="3">
    <location>
        <begin position="1"/>
        <end position="10"/>
    </location>
</feature>
<feature type="binding site" evidence="2">
    <location>
        <position position="51"/>
    </location>
    <ligand>
        <name>S-adenosyl-L-methionine</name>
        <dbReference type="ChEBI" id="CHEBI:59789"/>
    </ligand>
</feature>
<feature type="binding site" evidence="2">
    <location>
        <position position="73"/>
    </location>
    <ligand>
        <name>S-adenosyl-L-methionine</name>
        <dbReference type="ChEBI" id="CHEBI:59789"/>
    </ligand>
</feature>
<feature type="binding site" evidence="2">
    <location>
        <begin position="75"/>
        <end position="76"/>
    </location>
    <ligand>
        <name>S-adenosyl-L-methionine</name>
        <dbReference type="ChEBI" id="CHEBI:59789"/>
    </ligand>
</feature>
<feature type="binding site" evidence="2">
    <location>
        <position position="81"/>
    </location>
    <ligand>
        <name>S-adenosyl-L-methionine</name>
        <dbReference type="ChEBI" id="CHEBI:59789"/>
    </ligand>
</feature>
<feature type="binding site" evidence="2">
    <location>
        <position position="99"/>
    </location>
    <ligand>
        <name>S-adenosyl-L-methionine</name>
        <dbReference type="ChEBI" id="CHEBI:59789"/>
    </ligand>
</feature>
<feature type="binding site" evidence="2">
    <location>
        <position position="100"/>
    </location>
    <ligand>
        <name>S-adenosyl-L-methionine</name>
        <dbReference type="ChEBI" id="CHEBI:59789"/>
    </ligand>
</feature>
<feature type="binding site" evidence="1">
    <location>
        <position position="147"/>
    </location>
    <ligand>
        <name>substrate</name>
    </ligand>
</feature>
<feature type="binding site" evidence="2">
    <location>
        <position position="149"/>
    </location>
    <ligand>
        <name>S-adenosyl-L-methionine</name>
        <dbReference type="ChEBI" id="CHEBI:59789"/>
    </ligand>
</feature>
<protein>
    <recommendedName>
        <fullName>Putative O-methyltransferase Mb1252c</fullName>
        <ecNumber>2.1.1.-</ecNumber>
    </recommendedName>
</protein>
<sequence length="224" mass="23033">MDGTPGHDDMPGQPAPSRGESLWAHAEGSISEDVILAGARERATDIGAGAVTPAVGALLCLLAKLSGGKAVAEVGTGAGVSGLWLLSGMRDDGVLTTIDIEPEHLRLARQAFAEAGIGPSRTRLISGRAQEVLTRLADASYDLVFIDADPIDQPDYVAEGVRLLRSGGVIVVHRAALGGRAGDPGARDAEVIAVREAARLIAEDERLTPALVPLGDGVLAAVRD</sequence>
<proteinExistence type="inferred from homology"/>